<protein>
    <recommendedName>
        <fullName evidence="1">UPF0301 protein Smed_0532</fullName>
    </recommendedName>
</protein>
<reference key="1">
    <citation type="submission" date="2007-06" db="EMBL/GenBank/DDBJ databases">
        <title>Complete sequence of Sinorhizobium medicae WSM419 chromosome.</title>
        <authorList>
            <consortium name="US DOE Joint Genome Institute"/>
            <person name="Copeland A."/>
            <person name="Lucas S."/>
            <person name="Lapidus A."/>
            <person name="Barry K."/>
            <person name="Glavina del Rio T."/>
            <person name="Dalin E."/>
            <person name="Tice H."/>
            <person name="Pitluck S."/>
            <person name="Chain P."/>
            <person name="Malfatti S."/>
            <person name="Shin M."/>
            <person name="Vergez L."/>
            <person name="Schmutz J."/>
            <person name="Larimer F."/>
            <person name="Land M."/>
            <person name="Hauser L."/>
            <person name="Kyrpides N."/>
            <person name="Mikhailova N."/>
            <person name="Reeve W.G."/>
            <person name="Richardson P."/>
        </authorList>
    </citation>
    <scope>NUCLEOTIDE SEQUENCE [LARGE SCALE GENOMIC DNA]</scope>
    <source>
        <strain>WSM419</strain>
    </source>
</reference>
<proteinExistence type="inferred from homology"/>
<sequence>MATNVLNSIRERGFLDGQFLIAMPGMFDANFARTVIFVCAHSEDGAMGFILNRPQRLTFPDVLLHLQLLDPDEVIRLPSTTREFQIQAGGPVETGRGFVLHSDDYLSDSSIPVSDDICLTATLDIVRAISRGEGPVKATMLLGYAGWGPGQLEAEITQNGWLTCPAQEELIFSRNLDEKYDRALALMGVSPAMLSTDSGHA</sequence>
<accession>A6U6V8</accession>
<dbReference type="EMBL" id="CP000738">
    <property type="protein sequence ID" value="ABR59388.1"/>
    <property type="molecule type" value="Genomic_DNA"/>
</dbReference>
<dbReference type="RefSeq" id="WP_011974734.1">
    <property type="nucleotide sequence ID" value="NC_009636.1"/>
</dbReference>
<dbReference type="RefSeq" id="YP_001326223.1">
    <property type="nucleotide sequence ID" value="NC_009636.1"/>
</dbReference>
<dbReference type="SMR" id="A6U6V8"/>
<dbReference type="STRING" id="366394.Smed_0532"/>
<dbReference type="KEGG" id="smd:Smed_0532"/>
<dbReference type="PATRIC" id="fig|366394.8.peg.3620"/>
<dbReference type="eggNOG" id="COG1678">
    <property type="taxonomic scope" value="Bacteria"/>
</dbReference>
<dbReference type="HOGENOM" id="CLU_057596_1_0_5"/>
<dbReference type="OrthoDB" id="9807486at2"/>
<dbReference type="Proteomes" id="UP000001108">
    <property type="component" value="Chromosome"/>
</dbReference>
<dbReference type="GO" id="GO:0005829">
    <property type="term" value="C:cytosol"/>
    <property type="evidence" value="ECO:0007669"/>
    <property type="project" value="TreeGrafter"/>
</dbReference>
<dbReference type="Gene3D" id="3.40.1740.10">
    <property type="entry name" value="VC0467-like"/>
    <property type="match status" value="1"/>
</dbReference>
<dbReference type="HAMAP" id="MF_00758">
    <property type="entry name" value="UPF0301"/>
    <property type="match status" value="1"/>
</dbReference>
<dbReference type="InterPro" id="IPR003774">
    <property type="entry name" value="AlgH-like"/>
</dbReference>
<dbReference type="NCBIfam" id="NF001268">
    <property type="entry name" value="PRK00228.1-4"/>
    <property type="match status" value="1"/>
</dbReference>
<dbReference type="PANTHER" id="PTHR30327">
    <property type="entry name" value="UNCHARACTERIZED PROTEIN YQGE"/>
    <property type="match status" value="1"/>
</dbReference>
<dbReference type="PANTHER" id="PTHR30327:SF1">
    <property type="entry name" value="UPF0301 PROTEIN YQGE"/>
    <property type="match status" value="1"/>
</dbReference>
<dbReference type="Pfam" id="PF02622">
    <property type="entry name" value="DUF179"/>
    <property type="match status" value="1"/>
</dbReference>
<dbReference type="SUPFAM" id="SSF143456">
    <property type="entry name" value="VC0467-like"/>
    <property type="match status" value="1"/>
</dbReference>
<gene>
    <name type="ordered locus">Smed_0532</name>
</gene>
<comment type="similarity">
    <text evidence="1">Belongs to the UPF0301 (AlgH) family.</text>
</comment>
<organism>
    <name type="scientific">Sinorhizobium medicae (strain WSM419)</name>
    <name type="common">Ensifer medicae</name>
    <dbReference type="NCBI Taxonomy" id="366394"/>
    <lineage>
        <taxon>Bacteria</taxon>
        <taxon>Pseudomonadati</taxon>
        <taxon>Pseudomonadota</taxon>
        <taxon>Alphaproteobacteria</taxon>
        <taxon>Hyphomicrobiales</taxon>
        <taxon>Rhizobiaceae</taxon>
        <taxon>Sinorhizobium/Ensifer group</taxon>
        <taxon>Sinorhizobium</taxon>
    </lineage>
</organism>
<name>Y532_SINMW</name>
<feature type="chain" id="PRO_1000046687" description="UPF0301 protein Smed_0532">
    <location>
        <begin position="1"/>
        <end position="201"/>
    </location>
</feature>
<evidence type="ECO:0000255" key="1">
    <source>
        <dbReference type="HAMAP-Rule" id="MF_00758"/>
    </source>
</evidence>